<sequence length="157" mass="17575">MKLSLMVAISKNGVIGNGPDIPWSAKGEQLLFKAITYNQWLLVGRKTFESMGALPNRKYAVVTRSSFTSDNENVLIFPSIKDALTNLKKITDHVIVSGGGEIYKSLIDQVDTLHISTIDIEPEGDVYFPEIPSNFRPVFTQDFASNINYSYQIWQKG</sequence>
<name>DYR1_ECOLX</name>
<evidence type="ECO:0000250" key="1"/>
<evidence type="ECO:0000255" key="2">
    <source>
        <dbReference type="PROSITE-ProRule" id="PRU00660"/>
    </source>
</evidence>
<evidence type="ECO:0000305" key="3"/>
<evidence type="ECO:0007829" key="4">
    <source>
        <dbReference type="PDB" id="7RGJ"/>
    </source>
</evidence>
<dbReference type="EC" id="1.5.1.3"/>
<dbReference type="EMBL" id="X00926">
    <property type="protein sequence ID" value="CAA25445.1"/>
    <property type="molecule type" value="Genomic_DNA"/>
</dbReference>
<dbReference type="EMBL" id="X17477">
    <property type="protein sequence ID" value="CAA35509.1"/>
    <property type="molecule type" value="Genomic_DNA"/>
</dbReference>
<dbReference type="EMBL" id="X17478">
    <property type="protein sequence ID" value="CAA35512.1"/>
    <property type="molecule type" value="Genomic_DNA"/>
</dbReference>
<dbReference type="PIR" id="S03651">
    <property type="entry name" value="RDECD7"/>
</dbReference>
<dbReference type="RefSeq" id="NP_065309.1">
    <property type="nucleotide sequence ID" value="NC_002525.1"/>
</dbReference>
<dbReference type="RefSeq" id="YP_004422906.1">
    <property type="nucleotide sequence ID" value="NC_015472.1"/>
</dbReference>
<dbReference type="RefSeq" id="YP_190212.1">
    <property type="nucleotide sequence ID" value="NC_006671.1"/>
</dbReference>
<dbReference type="PDB" id="7REG">
    <property type="method" value="X-ray"/>
    <property type="resolution" value="1.77 A"/>
    <property type="chains" value="A/B=1-157"/>
</dbReference>
<dbReference type="PDB" id="7RGJ">
    <property type="method" value="X-ray"/>
    <property type="resolution" value="1.44 A"/>
    <property type="chains" value="A/B=1-157"/>
</dbReference>
<dbReference type="PDBsum" id="7REG"/>
<dbReference type="PDBsum" id="7RGJ"/>
<dbReference type="SMR" id="P00382"/>
<dbReference type="BindingDB" id="P00382"/>
<dbReference type="ChEMBL" id="CHEMBL2627"/>
<dbReference type="DrugCentral" id="P00382"/>
<dbReference type="KEGG" id="ag:CAA25445"/>
<dbReference type="UniPathway" id="UPA00077">
    <property type="reaction ID" value="UER00158"/>
</dbReference>
<dbReference type="PRO" id="PR:P00382"/>
<dbReference type="GO" id="GO:0004146">
    <property type="term" value="F:dihydrofolate reductase activity"/>
    <property type="evidence" value="ECO:0007669"/>
    <property type="project" value="UniProtKB-EC"/>
</dbReference>
<dbReference type="GO" id="GO:0050661">
    <property type="term" value="F:NADP binding"/>
    <property type="evidence" value="ECO:0007669"/>
    <property type="project" value="InterPro"/>
</dbReference>
<dbReference type="GO" id="GO:0046452">
    <property type="term" value="P:dihydrofolate metabolic process"/>
    <property type="evidence" value="ECO:0007669"/>
    <property type="project" value="TreeGrafter"/>
</dbReference>
<dbReference type="GO" id="GO:0046655">
    <property type="term" value="P:folic acid metabolic process"/>
    <property type="evidence" value="ECO:0007669"/>
    <property type="project" value="TreeGrafter"/>
</dbReference>
<dbReference type="GO" id="GO:0006730">
    <property type="term" value="P:one-carbon metabolic process"/>
    <property type="evidence" value="ECO:0007669"/>
    <property type="project" value="UniProtKB-KW"/>
</dbReference>
<dbReference type="GO" id="GO:0046677">
    <property type="term" value="P:response to antibiotic"/>
    <property type="evidence" value="ECO:0007669"/>
    <property type="project" value="UniProtKB-KW"/>
</dbReference>
<dbReference type="GO" id="GO:0031427">
    <property type="term" value="P:response to methotrexate"/>
    <property type="evidence" value="ECO:0007669"/>
    <property type="project" value="UniProtKB-KW"/>
</dbReference>
<dbReference type="GO" id="GO:0046654">
    <property type="term" value="P:tetrahydrofolate biosynthetic process"/>
    <property type="evidence" value="ECO:0007669"/>
    <property type="project" value="UniProtKB-UniPathway"/>
</dbReference>
<dbReference type="CDD" id="cd00209">
    <property type="entry name" value="DHFR"/>
    <property type="match status" value="1"/>
</dbReference>
<dbReference type="Gene3D" id="3.40.430.10">
    <property type="entry name" value="Dihydrofolate Reductase, subunit A"/>
    <property type="match status" value="1"/>
</dbReference>
<dbReference type="InterPro" id="IPR012259">
    <property type="entry name" value="DHFR"/>
</dbReference>
<dbReference type="InterPro" id="IPR024072">
    <property type="entry name" value="DHFR-like_dom_sf"/>
</dbReference>
<dbReference type="InterPro" id="IPR017925">
    <property type="entry name" value="DHFR_CS"/>
</dbReference>
<dbReference type="InterPro" id="IPR001796">
    <property type="entry name" value="DHFR_dom"/>
</dbReference>
<dbReference type="NCBIfam" id="NF000330">
    <property type="entry name" value="trim_DfrA1_like"/>
    <property type="match status" value="1"/>
</dbReference>
<dbReference type="PANTHER" id="PTHR48069">
    <property type="entry name" value="DIHYDROFOLATE REDUCTASE"/>
    <property type="match status" value="1"/>
</dbReference>
<dbReference type="PANTHER" id="PTHR48069:SF3">
    <property type="entry name" value="DIHYDROFOLATE REDUCTASE"/>
    <property type="match status" value="1"/>
</dbReference>
<dbReference type="Pfam" id="PF00186">
    <property type="entry name" value="DHFR_1"/>
    <property type="match status" value="1"/>
</dbReference>
<dbReference type="PRINTS" id="PR00070">
    <property type="entry name" value="DHFR"/>
</dbReference>
<dbReference type="SUPFAM" id="SSF53597">
    <property type="entry name" value="Dihydrofolate reductase-like"/>
    <property type="match status" value="1"/>
</dbReference>
<dbReference type="PROSITE" id="PS00075">
    <property type="entry name" value="DHFR_1"/>
    <property type="match status" value="1"/>
</dbReference>
<dbReference type="PROSITE" id="PS51330">
    <property type="entry name" value="DHFR_2"/>
    <property type="match status" value="1"/>
</dbReference>
<proteinExistence type="evidence at protein level"/>
<protein>
    <recommendedName>
        <fullName>Dihydrofolate reductase type 1</fullName>
        <ecNumber>1.5.1.3</ecNumber>
    </recommendedName>
    <alternativeName>
        <fullName>Dihydrofolate reductase type I</fullName>
    </alternativeName>
    <alternativeName>
        <fullName>Trimethoprim resistance protein</fullName>
    </alternativeName>
</protein>
<reference key="1">
    <citation type="journal article" date="1983" name="Nucleic Acids Res.">
        <title>The nucleotide sequence of the trimethoprim-resistant dihydrofolate reductase gene harbored by Tn7.</title>
        <authorList>
            <person name="Fling M.E."/>
            <person name="Richards C."/>
        </authorList>
    </citation>
    <scope>NUCLEOTIDE SEQUENCE [GENOMIC DNA]</scope>
    <source>
        <transposon>Tn7</transposon>
    </source>
</reference>
<reference key="2">
    <citation type="journal article" date="1988" name="Nucleic Acids Res.">
        <title>Expression of the plasmid-encoded type I dihydrofolate reductase gene in cultured mammalian cells: a novel selectable marker.</title>
        <authorList>
            <person name="Simonsen C.S."/>
            <person name="Walter M."/>
            <person name="Levinson A.D."/>
        </authorList>
    </citation>
    <scope>NUCLEOTIDE SEQUENCE [GENOMIC DNA]</scope>
    <source>
        <plasmid>IncI1 R483</plasmid>
    </source>
</reference>
<reference key="3">
    <citation type="journal article" date="1990" name="Antimicrob. Agents Chemother.">
        <title>The dhfrI trimethoprim resistance gene of Tn7 can be found at specific sites in other genetic surroundings.</title>
        <authorList>
            <person name="Sundstroem L."/>
            <person name="Skoeld O."/>
        </authorList>
    </citation>
    <scope>NUCLEOTIDE SEQUENCE [GENOMIC DNA]</scope>
    <source>
        <plasmid>pLMO150</plasmid>
        <plasmid>pLMO229</plasmid>
    </source>
</reference>
<reference key="4">
    <citation type="journal article" date="1983" name="J. Biol. Chem.">
        <title>R plasmid dihydrofolate reductase with a dimeric subunit structure.</title>
        <authorList>
            <person name="Novak P."/>
            <person name="Stone D."/>
            <person name="Burchall J.J."/>
        </authorList>
    </citation>
    <scope>PROTEIN SEQUENCE OF 1-34</scope>
    <source>
        <plasmid>IncI1 R483</plasmid>
    </source>
</reference>
<gene>
    <name type="primary">dhfrI</name>
</gene>
<accession>P00382</accession>
<accession>P13923</accession>
<geneLocation type="plasmid">
    <name>IncI1 R483</name>
</geneLocation>
<geneLocation type="plasmid">
    <name>pLMO150</name>
</geneLocation>
<geneLocation type="plasmid">
    <name>pLMO229</name>
</geneLocation>
<organism>
    <name type="scientific">Escherichia coli</name>
    <dbReference type="NCBI Taxonomy" id="562"/>
    <lineage>
        <taxon>Bacteria</taxon>
        <taxon>Pseudomonadati</taxon>
        <taxon>Pseudomonadota</taxon>
        <taxon>Gammaproteobacteria</taxon>
        <taxon>Enterobacterales</taxon>
        <taxon>Enterobacteriaceae</taxon>
        <taxon>Escherichia</taxon>
    </lineage>
</organism>
<keyword id="KW-0002">3D-structure</keyword>
<keyword id="KW-0046">Antibiotic resistance</keyword>
<keyword id="KW-0903">Direct protein sequencing</keyword>
<keyword id="KW-0487">Methotrexate resistance</keyword>
<keyword id="KW-0521">NADP</keyword>
<keyword id="KW-0554">One-carbon metabolism</keyword>
<keyword id="KW-0560">Oxidoreductase</keyword>
<keyword id="KW-0614">Plasmid</keyword>
<keyword id="KW-0814">Transposable element</keyword>
<keyword id="KW-0817">Trimethoprim resistance</keyword>
<feature type="chain" id="PRO_0000186420" description="Dihydrofolate reductase type 1">
    <location>
        <begin position="1"/>
        <end position="157"/>
    </location>
</feature>
<feature type="domain" description="DHFR" evidence="2">
    <location>
        <begin position="2"/>
        <end position="156"/>
    </location>
</feature>
<feature type="sequence variant" description="In plasmid pLMO229.">
    <original>L</original>
    <variation>V</variation>
    <location>
        <position position="75"/>
    </location>
</feature>
<feature type="strand" evidence="4">
    <location>
        <begin position="2"/>
        <end position="10"/>
    </location>
</feature>
<feature type="strand" evidence="4">
    <location>
        <begin position="13"/>
        <end position="17"/>
    </location>
</feature>
<feature type="helix" evidence="4">
    <location>
        <begin position="28"/>
        <end position="36"/>
    </location>
</feature>
<feature type="strand" evidence="4">
    <location>
        <begin position="40"/>
        <end position="44"/>
    </location>
</feature>
<feature type="helix" evidence="4">
    <location>
        <begin position="45"/>
        <end position="51"/>
    </location>
</feature>
<feature type="strand" evidence="4">
    <location>
        <begin position="58"/>
        <end position="62"/>
    </location>
</feature>
<feature type="strand" evidence="4">
    <location>
        <begin position="74"/>
        <end position="79"/>
    </location>
</feature>
<feature type="helix" evidence="4">
    <location>
        <begin position="80"/>
        <end position="90"/>
    </location>
</feature>
<feature type="strand" evidence="4">
    <location>
        <begin position="92"/>
        <end position="96"/>
    </location>
</feature>
<feature type="helix" evidence="4">
    <location>
        <begin position="100"/>
        <end position="106"/>
    </location>
</feature>
<feature type="turn" evidence="4">
    <location>
        <begin position="107"/>
        <end position="109"/>
    </location>
</feature>
<feature type="strand" evidence="4">
    <location>
        <begin position="111"/>
        <end position="119"/>
    </location>
</feature>
<feature type="strand" evidence="4">
    <location>
        <begin position="125"/>
        <end position="127"/>
    </location>
</feature>
<feature type="strand" evidence="4">
    <location>
        <begin position="136"/>
        <end position="143"/>
    </location>
</feature>
<feature type="strand" evidence="4">
    <location>
        <begin position="145"/>
        <end position="147"/>
    </location>
</feature>
<feature type="strand" evidence="4">
    <location>
        <begin position="149"/>
        <end position="155"/>
    </location>
</feature>
<comment type="function">
    <text evidence="1">Key enzyme in folate metabolism. Catalyzes an essential reaction for de novo glycine and purine synthesis, and for DNA precursor synthesis (By similarity).</text>
</comment>
<comment type="catalytic activity">
    <reaction evidence="2">
        <text>(6S)-5,6,7,8-tetrahydrofolate + NADP(+) = 7,8-dihydrofolate + NADPH + H(+)</text>
        <dbReference type="Rhea" id="RHEA:15009"/>
        <dbReference type="ChEBI" id="CHEBI:15378"/>
        <dbReference type="ChEBI" id="CHEBI:57451"/>
        <dbReference type="ChEBI" id="CHEBI:57453"/>
        <dbReference type="ChEBI" id="CHEBI:57783"/>
        <dbReference type="ChEBI" id="CHEBI:58349"/>
        <dbReference type="EC" id="1.5.1.3"/>
    </reaction>
</comment>
<comment type="pathway">
    <text>Cofactor biosynthesis; tetrahydrofolate biosynthesis; 5,6,7,8-tetrahydrofolate from 7,8-dihydrofolate: step 1/1.</text>
</comment>
<comment type="subunit">
    <text>Homodimer.</text>
</comment>
<comment type="similarity">
    <text evidence="3">Belongs to the dihydrofolate reductase family.</text>
</comment>